<evidence type="ECO:0000255" key="1">
    <source>
        <dbReference type="HAMAP-Rule" id="MF_00735"/>
    </source>
</evidence>
<reference key="1">
    <citation type="journal article" date="2010" name="Genome Biol.">
        <title>Structure and dynamics of the pan-genome of Streptococcus pneumoniae and closely related species.</title>
        <authorList>
            <person name="Donati C."/>
            <person name="Hiller N.L."/>
            <person name="Tettelin H."/>
            <person name="Muzzi A."/>
            <person name="Croucher N.J."/>
            <person name="Angiuoli S.V."/>
            <person name="Oggioni M."/>
            <person name="Dunning Hotopp J.C."/>
            <person name="Hu F.Z."/>
            <person name="Riley D.R."/>
            <person name="Covacci A."/>
            <person name="Mitchell T.J."/>
            <person name="Bentley S.D."/>
            <person name="Kilian M."/>
            <person name="Ehrlich G.D."/>
            <person name="Rappuoli R."/>
            <person name="Moxon E.R."/>
            <person name="Masignani V."/>
        </authorList>
    </citation>
    <scope>NUCLEOTIDE SEQUENCE [LARGE SCALE GENOMIC DNA]</scope>
    <source>
        <strain>Hungary19A-6</strain>
    </source>
</reference>
<dbReference type="EC" id="2.1.1.-" evidence="1"/>
<dbReference type="EMBL" id="CP000936">
    <property type="protein sequence ID" value="ACA36996.1"/>
    <property type="molecule type" value="Genomic_DNA"/>
</dbReference>
<dbReference type="RefSeq" id="WP_000451169.1">
    <property type="nucleotide sequence ID" value="NC_010380.1"/>
</dbReference>
<dbReference type="SMR" id="B1I7P5"/>
<dbReference type="KEGG" id="spv:SPH_1899"/>
<dbReference type="HOGENOM" id="CLU_049382_0_1_9"/>
<dbReference type="Proteomes" id="UP000002163">
    <property type="component" value="Chromosome"/>
</dbReference>
<dbReference type="GO" id="GO:0005737">
    <property type="term" value="C:cytoplasm"/>
    <property type="evidence" value="ECO:0007669"/>
    <property type="project" value="UniProtKB-SubCell"/>
</dbReference>
<dbReference type="GO" id="GO:0016279">
    <property type="term" value="F:protein-lysine N-methyltransferase activity"/>
    <property type="evidence" value="ECO:0007669"/>
    <property type="project" value="RHEA"/>
</dbReference>
<dbReference type="GO" id="GO:0032259">
    <property type="term" value="P:methylation"/>
    <property type="evidence" value="ECO:0007669"/>
    <property type="project" value="UniProtKB-KW"/>
</dbReference>
<dbReference type="CDD" id="cd02440">
    <property type="entry name" value="AdoMet_MTases"/>
    <property type="match status" value="1"/>
</dbReference>
<dbReference type="Gene3D" id="3.40.50.150">
    <property type="entry name" value="Vaccinia Virus protein VP39"/>
    <property type="match status" value="1"/>
</dbReference>
<dbReference type="HAMAP" id="MF_00735">
    <property type="entry name" value="Methyltr_PrmA"/>
    <property type="match status" value="1"/>
</dbReference>
<dbReference type="InterPro" id="IPR050078">
    <property type="entry name" value="Ribosomal_L11_MeTrfase_PrmA"/>
</dbReference>
<dbReference type="InterPro" id="IPR004498">
    <property type="entry name" value="Ribosomal_PrmA_MeTrfase"/>
</dbReference>
<dbReference type="InterPro" id="IPR029063">
    <property type="entry name" value="SAM-dependent_MTases_sf"/>
</dbReference>
<dbReference type="NCBIfam" id="TIGR00406">
    <property type="entry name" value="prmA"/>
    <property type="match status" value="1"/>
</dbReference>
<dbReference type="PANTHER" id="PTHR43648">
    <property type="entry name" value="ELECTRON TRANSFER FLAVOPROTEIN BETA SUBUNIT LYSINE METHYLTRANSFERASE"/>
    <property type="match status" value="1"/>
</dbReference>
<dbReference type="PANTHER" id="PTHR43648:SF1">
    <property type="entry name" value="ELECTRON TRANSFER FLAVOPROTEIN BETA SUBUNIT LYSINE METHYLTRANSFERASE"/>
    <property type="match status" value="1"/>
</dbReference>
<dbReference type="Pfam" id="PF06325">
    <property type="entry name" value="PrmA"/>
    <property type="match status" value="1"/>
</dbReference>
<dbReference type="PIRSF" id="PIRSF000401">
    <property type="entry name" value="RPL11_MTase"/>
    <property type="match status" value="1"/>
</dbReference>
<dbReference type="SUPFAM" id="SSF53335">
    <property type="entry name" value="S-adenosyl-L-methionine-dependent methyltransferases"/>
    <property type="match status" value="1"/>
</dbReference>
<sequence>METWQELKVTVKREGEELVSNLLIELGAQGVAIEDSMDYVGNVDRFGEIFPEVEQQEEIVVTAYYPETVDVATVESDLQARLAELTDFMDLGEVKMGTTALAEEDWADNWKKYYEPARITHDLTIVPSWTDYEATAGEMIIKLDPGMAFGTGTHPTTKMSLFALEQVLRGGETVLDVGTGSGVLSIASSLLGAKEIFAYDLDDVAVRVAQENIELNPGMENIHVAAGDLLKGVEIEADVIVANILADILIHLIDDAYRLVKDEGYLIMSGIIKDKWDMVRESAESAGFFLETHMVQGEWNTCVFKKTKDISGVIGG</sequence>
<keyword id="KW-0963">Cytoplasm</keyword>
<keyword id="KW-0489">Methyltransferase</keyword>
<keyword id="KW-0949">S-adenosyl-L-methionine</keyword>
<keyword id="KW-0808">Transferase</keyword>
<name>PRMA_STRPI</name>
<feature type="chain" id="PRO_1000132832" description="Ribosomal protein L11 methyltransferase">
    <location>
        <begin position="1"/>
        <end position="316"/>
    </location>
</feature>
<feature type="binding site" evidence="1">
    <location>
        <position position="157"/>
    </location>
    <ligand>
        <name>S-adenosyl-L-methionine</name>
        <dbReference type="ChEBI" id="CHEBI:59789"/>
    </ligand>
</feature>
<feature type="binding site" evidence="1">
    <location>
        <position position="178"/>
    </location>
    <ligand>
        <name>S-adenosyl-L-methionine</name>
        <dbReference type="ChEBI" id="CHEBI:59789"/>
    </ligand>
</feature>
<feature type="binding site" evidence="1">
    <location>
        <position position="200"/>
    </location>
    <ligand>
        <name>S-adenosyl-L-methionine</name>
        <dbReference type="ChEBI" id="CHEBI:59789"/>
    </ligand>
</feature>
<feature type="binding site" evidence="1">
    <location>
        <position position="243"/>
    </location>
    <ligand>
        <name>S-adenosyl-L-methionine</name>
        <dbReference type="ChEBI" id="CHEBI:59789"/>
    </ligand>
</feature>
<comment type="function">
    <text evidence="1">Methylates ribosomal protein L11.</text>
</comment>
<comment type="catalytic activity">
    <reaction evidence="1">
        <text>L-lysyl-[protein] + 3 S-adenosyl-L-methionine = N(6),N(6),N(6)-trimethyl-L-lysyl-[protein] + 3 S-adenosyl-L-homocysteine + 3 H(+)</text>
        <dbReference type="Rhea" id="RHEA:54192"/>
        <dbReference type="Rhea" id="RHEA-COMP:9752"/>
        <dbReference type="Rhea" id="RHEA-COMP:13826"/>
        <dbReference type="ChEBI" id="CHEBI:15378"/>
        <dbReference type="ChEBI" id="CHEBI:29969"/>
        <dbReference type="ChEBI" id="CHEBI:57856"/>
        <dbReference type="ChEBI" id="CHEBI:59789"/>
        <dbReference type="ChEBI" id="CHEBI:61961"/>
    </reaction>
</comment>
<comment type="subcellular location">
    <subcellularLocation>
        <location evidence="1">Cytoplasm</location>
    </subcellularLocation>
</comment>
<comment type="similarity">
    <text evidence="1">Belongs to the methyltransferase superfamily. PrmA family.</text>
</comment>
<protein>
    <recommendedName>
        <fullName evidence="1">Ribosomal protein L11 methyltransferase</fullName>
        <shortName evidence="1">L11 Mtase</shortName>
        <ecNumber evidence="1">2.1.1.-</ecNumber>
    </recommendedName>
</protein>
<gene>
    <name evidence="1" type="primary">prmA</name>
    <name type="ordered locus">SPH_1899</name>
</gene>
<accession>B1I7P5</accession>
<proteinExistence type="inferred from homology"/>
<organism>
    <name type="scientific">Streptococcus pneumoniae (strain Hungary19A-6)</name>
    <dbReference type="NCBI Taxonomy" id="487214"/>
    <lineage>
        <taxon>Bacteria</taxon>
        <taxon>Bacillati</taxon>
        <taxon>Bacillota</taxon>
        <taxon>Bacilli</taxon>
        <taxon>Lactobacillales</taxon>
        <taxon>Streptococcaceae</taxon>
        <taxon>Streptococcus</taxon>
    </lineage>
</organism>